<proteinExistence type="inferred from homology"/>
<feature type="chain" id="PRO_0000361118" description="Putative S-adenosyl-L-methionine-dependent methyltransferase MAV_0778">
    <location>
        <begin position="1"/>
        <end position="298"/>
    </location>
</feature>
<feature type="binding site" evidence="1">
    <location>
        <position position="124"/>
    </location>
    <ligand>
        <name>S-adenosyl-L-methionine</name>
        <dbReference type="ChEBI" id="CHEBI:59789"/>
    </ligand>
</feature>
<feature type="binding site" evidence="1">
    <location>
        <begin position="153"/>
        <end position="154"/>
    </location>
    <ligand>
        <name>S-adenosyl-L-methionine</name>
        <dbReference type="ChEBI" id="CHEBI:59789"/>
    </ligand>
</feature>
<evidence type="ECO:0000250" key="1"/>
<evidence type="ECO:0000305" key="2"/>
<protein>
    <recommendedName>
        <fullName>Putative S-adenosyl-L-methionine-dependent methyltransferase MAV_0778</fullName>
        <ecNumber>2.1.1.-</ecNumber>
    </recommendedName>
</protein>
<accession>A0QAW3</accession>
<dbReference type="EC" id="2.1.1.-"/>
<dbReference type="EMBL" id="CP000479">
    <property type="protein sequence ID" value="ABK65096.1"/>
    <property type="molecule type" value="Genomic_DNA"/>
</dbReference>
<dbReference type="RefSeq" id="WP_011723749.1">
    <property type="nucleotide sequence ID" value="NC_008595.1"/>
</dbReference>
<dbReference type="SMR" id="A0QAW3"/>
<dbReference type="KEGG" id="mav:MAV_0778"/>
<dbReference type="HOGENOM" id="CLU_056160_2_1_11"/>
<dbReference type="Proteomes" id="UP000001574">
    <property type="component" value="Chromosome"/>
</dbReference>
<dbReference type="GO" id="GO:0008168">
    <property type="term" value="F:methyltransferase activity"/>
    <property type="evidence" value="ECO:0007669"/>
    <property type="project" value="UniProtKB-KW"/>
</dbReference>
<dbReference type="GO" id="GO:0032259">
    <property type="term" value="P:methylation"/>
    <property type="evidence" value="ECO:0007669"/>
    <property type="project" value="UniProtKB-KW"/>
</dbReference>
<dbReference type="FunFam" id="3.40.50.150:FF:000152">
    <property type="entry name" value="S-adenosyl-L-methionine-dependent methyltransferase"/>
    <property type="match status" value="1"/>
</dbReference>
<dbReference type="Gene3D" id="3.40.50.150">
    <property type="entry name" value="Vaccinia Virus protein VP39"/>
    <property type="match status" value="1"/>
</dbReference>
<dbReference type="InterPro" id="IPR007213">
    <property type="entry name" value="Ppm1/Ppm2/Tcmp"/>
</dbReference>
<dbReference type="InterPro" id="IPR029063">
    <property type="entry name" value="SAM-dependent_MTases_sf"/>
</dbReference>
<dbReference type="InterPro" id="IPR011610">
    <property type="entry name" value="SAM_mthyl_Trfase_ML2640-like"/>
</dbReference>
<dbReference type="NCBIfam" id="TIGR00027">
    <property type="entry name" value="mthyl_TIGR00027"/>
    <property type="match status" value="1"/>
</dbReference>
<dbReference type="PANTHER" id="PTHR43619">
    <property type="entry name" value="S-ADENOSYL-L-METHIONINE-DEPENDENT METHYLTRANSFERASE YKTD-RELATED"/>
    <property type="match status" value="1"/>
</dbReference>
<dbReference type="PANTHER" id="PTHR43619:SF2">
    <property type="entry name" value="S-ADENOSYL-L-METHIONINE-DEPENDENT METHYLTRANSFERASES SUPERFAMILY PROTEIN"/>
    <property type="match status" value="1"/>
</dbReference>
<dbReference type="Pfam" id="PF04072">
    <property type="entry name" value="LCM"/>
    <property type="match status" value="1"/>
</dbReference>
<dbReference type="SUPFAM" id="SSF53335">
    <property type="entry name" value="S-adenosyl-L-methionine-dependent methyltransferases"/>
    <property type="match status" value="1"/>
</dbReference>
<reference key="1">
    <citation type="submission" date="2006-10" db="EMBL/GenBank/DDBJ databases">
        <authorList>
            <person name="Fleischmann R.D."/>
            <person name="Dodson R.J."/>
            <person name="Haft D.H."/>
            <person name="Merkel J.S."/>
            <person name="Nelson W.C."/>
            <person name="Fraser C.M."/>
        </authorList>
    </citation>
    <scope>NUCLEOTIDE SEQUENCE [LARGE SCALE GENOMIC DNA]</scope>
    <source>
        <strain>104</strain>
    </source>
</reference>
<comment type="function">
    <text evidence="1">Exhibits S-adenosyl-L-methionine-dependent methyltransferase activity.</text>
</comment>
<comment type="similarity">
    <text evidence="2">Belongs to the UPF0677 family.</text>
</comment>
<organism>
    <name type="scientific">Mycobacterium avium (strain 104)</name>
    <dbReference type="NCBI Taxonomy" id="243243"/>
    <lineage>
        <taxon>Bacteria</taxon>
        <taxon>Bacillati</taxon>
        <taxon>Actinomycetota</taxon>
        <taxon>Actinomycetes</taxon>
        <taxon>Mycobacteriales</taxon>
        <taxon>Mycobacteriaceae</taxon>
        <taxon>Mycobacterium</taxon>
        <taxon>Mycobacterium avium complex (MAC)</taxon>
    </lineage>
</organism>
<name>Y778_MYCA1</name>
<keyword id="KW-0489">Methyltransferase</keyword>
<keyword id="KW-0949">S-adenosyl-L-methionine</keyword>
<keyword id="KW-0808">Transferase</keyword>
<sequence>MARTDHDRWDLATSVGATATMVAAQRALSSDANLIDDPYAAPLVRAVGIDVYVRLVDGEIQPGTSEFDPHRMAKGMACRTRFYDDFFLDAARAGVGQAVILASGLDARAYRLPWPAGTVVYEVDMPDVIEFKTLTLADLGAQPTAQRRTVAIDLRDDWAAALREEGFDTQAPAAWSAEGLLVYLPEQAQDALFDNITALSAPGSRLAFDFVPDTAVFADPRWRAHHERMSELGFEVDFNDLVYHGERSHIVDHLSGRGWRVTSRTIAELHAANGFAYAADDVAAAFADVTYSSAVLGG</sequence>
<gene>
    <name type="ordered locus">MAV_0778</name>
</gene>